<evidence type="ECO:0000255" key="1">
    <source>
        <dbReference type="HAMAP-Rule" id="MF_01224"/>
    </source>
</evidence>
<name>MOAC_XANOM</name>
<accession>Q2P6W1</accession>
<sequence>MPAKSRSARLTHLDDAGLPTMVDVSGKAITARSATAESRVRFPAAVAAQLRANGLRSAKGGIVETAVIAGTMAVKRTHELIPFCHPLPIDACRFEIDWAGEQVLDIRCTVRCVHRTGVEMEALTGASVAALTVYDMCKALSHSMSIGPTRLVSKRGGKRDIGAAQ</sequence>
<organism>
    <name type="scientific">Xanthomonas oryzae pv. oryzae (strain MAFF 311018)</name>
    <dbReference type="NCBI Taxonomy" id="342109"/>
    <lineage>
        <taxon>Bacteria</taxon>
        <taxon>Pseudomonadati</taxon>
        <taxon>Pseudomonadota</taxon>
        <taxon>Gammaproteobacteria</taxon>
        <taxon>Lysobacterales</taxon>
        <taxon>Lysobacteraceae</taxon>
        <taxon>Xanthomonas</taxon>
    </lineage>
</organism>
<dbReference type="EC" id="4.6.1.17" evidence="1"/>
<dbReference type="EMBL" id="AP008229">
    <property type="protein sequence ID" value="BAE67716.1"/>
    <property type="molecule type" value="Genomic_DNA"/>
</dbReference>
<dbReference type="RefSeq" id="WP_011407742.1">
    <property type="nucleotide sequence ID" value="NC_007705.1"/>
</dbReference>
<dbReference type="SMR" id="Q2P6W1"/>
<dbReference type="GeneID" id="77338603"/>
<dbReference type="KEGG" id="xom:XOO0961"/>
<dbReference type="HOGENOM" id="CLU_074693_1_0_6"/>
<dbReference type="UniPathway" id="UPA00344"/>
<dbReference type="GO" id="GO:0061799">
    <property type="term" value="F:cyclic pyranopterin monophosphate synthase activity"/>
    <property type="evidence" value="ECO:0007669"/>
    <property type="project" value="UniProtKB-UniRule"/>
</dbReference>
<dbReference type="GO" id="GO:0006777">
    <property type="term" value="P:Mo-molybdopterin cofactor biosynthetic process"/>
    <property type="evidence" value="ECO:0007669"/>
    <property type="project" value="UniProtKB-UniRule"/>
</dbReference>
<dbReference type="CDD" id="cd01420">
    <property type="entry name" value="MoaC_PE"/>
    <property type="match status" value="1"/>
</dbReference>
<dbReference type="Gene3D" id="3.30.70.640">
    <property type="entry name" value="Molybdopterin cofactor biosynthesis C (MoaC) domain"/>
    <property type="match status" value="1"/>
</dbReference>
<dbReference type="HAMAP" id="MF_01224_B">
    <property type="entry name" value="MoaC_B"/>
    <property type="match status" value="1"/>
</dbReference>
<dbReference type="InterPro" id="IPR023045">
    <property type="entry name" value="MoaC"/>
</dbReference>
<dbReference type="InterPro" id="IPR047594">
    <property type="entry name" value="MoaC_bact/euk"/>
</dbReference>
<dbReference type="InterPro" id="IPR036522">
    <property type="entry name" value="MoaC_sf"/>
</dbReference>
<dbReference type="InterPro" id="IPR002820">
    <property type="entry name" value="Mopterin_CF_biosynth-C_dom"/>
</dbReference>
<dbReference type="NCBIfam" id="TIGR00581">
    <property type="entry name" value="moaC"/>
    <property type="match status" value="1"/>
</dbReference>
<dbReference type="NCBIfam" id="NF006870">
    <property type="entry name" value="PRK09364.1"/>
    <property type="match status" value="1"/>
</dbReference>
<dbReference type="Pfam" id="PF01967">
    <property type="entry name" value="MoaC"/>
    <property type="match status" value="1"/>
</dbReference>
<dbReference type="SUPFAM" id="SSF55040">
    <property type="entry name" value="Molybdenum cofactor biosynthesis protein C, MoaC"/>
    <property type="match status" value="1"/>
</dbReference>
<keyword id="KW-0456">Lyase</keyword>
<keyword id="KW-0501">Molybdenum cofactor biosynthesis</keyword>
<comment type="function">
    <text evidence="1">Catalyzes the conversion of (8S)-3',8-cyclo-7,8-dihydroguanosine 5'-triphosphate to cyclic pyranopterin monophosphate (cPMP).</text>
</comment>
<comment type="catalytic activity">
    <reaction evidence="1">
        <text>(8S)-3',8-cyclo-7,8-dihydroguanosine 5'-triphosphate = cyclic pyranopterin phosphate + diphosphate</text>
        <dbReference type="Rhea" id="RHEA:49580"/>
        <dbReference type="ChEBI" id="CHEBI:33019"/>
        <dbReference type="ChEBI" id="CHEBI:59648"/>
        <dbReference type="ChEBI" id="CHEBI:131766"/>
        <dbReference type="EC" id="4.6.1.17"/>
    </reaction>
</comment>
<comment type="pathway">
    <text evidence="1">Cofactor biosynthesis; molybdopterin biosynthesis.</text>
</comment>
<comment type="subunit">
    <text evidence="1">Homohexamer; trimer of dimers.</text>
</comment>
<comment type="similarity">
    <text evidence="1">Belongs to the MoaC family.</text>
</comment>
<gene>
    <name evidence="1" type="primary">moaC</name>
    <name type="ordered locus">XOO0961</name>
</gene>
<reference key="1">
    <citation type="journal article" date="2005" name="Jpn. Agric. Res. Q.">
        <title>Genome sequence of Xanthomonas oryzae pv. oryzae suggests contribution of large numbers of effector genes and insertion sequences to its race diversity.</title>
        <authorList>
            <person name="Ochiai H."/>
            <person name="Inoue Y."/>
            <person name="Takeya M."/>
            <person name="Sasaki A."/>
            <person name="Kaku H."/>
        </authorList>
    </citation>
    <scope>NUCLEOTIDE SEQUENCE [LARGE SCALE GENOMIC DNA]</scope>
    <source>
        <strain>MAFF 311018</strain>
    </source>
</reference>
<proteinExistence type="inferred from homology"/>
<feature type="chain" id="PRO_1000054163" description="Cyclic pyranopterin monophosphate synthase">
    <location>
        <begin position="1"/>
        <end position="165"/>
    </location>
</feature>
<feature type="active site" evidence="1">
    <location>
        <position position="135"/>
    </location>
</feature>
<feature type="binding site" evidence="1">
    <location>
        <begin position="83"/>
        <end position="85"/>
    </location>
    <ligand>
        <name>substrate</name>
    </ligand>
</feature>
<feature type="binding site" evidence="1">
    <location>
        <begin position="120"/>
        <end position="121"/>
    </location>
    <ligand>
        <name>substrate</name>
    </ligand>
</feature>
<protein>
    <recommendedName>
        <fullName evidence="1">Cyclic pyranopterin monophosphate synthase</fullName>
        <ecNumber evidence="1">4.6.1.17</ecNumber>
    </recommendedName>
    <alternativeName>
        <fullName evidence="1">Molybdenum cofactor biosynthesis protein C</fullName>
    </alternativeName>
</protein>